<sequence>MSPIAFLLPFLLQMVLSTNVSTTSNNGVTEIRLDNKIVDLTKATVLERSKCCTVYRPVEDSSCIIVSSKHGASMVNCHGSVSISTSGKLSAEEMAEFNSLTQKYSG</sequence>
<comment type="subcellular location">
    <subcellularLocation>
        <location evidence="2">Secreted</location>
    </subcellularLocation>
</comment>
<comment type="tissue specificity">
    <text evidence="2">Expressed by the venom gland (anterior main gland) (at protein level).</text>
</comment>
<comment type="PTM">
    <text evidence="4">Contains 2 disulfide bonds.</text>
</comment>
<proteinExistence type="evidence at protein level"/>
<name>PR8A_PLARH</name>
<feature type="signal peptide" evidence="1">
    <location>
        <begin position="1"/>
        <end position="17"/>
    </location>
</feature>
<feature type="chain" id="PRO_5025616657" description="Venom family 8-like peptide Pr8a" evidence="4">
    <location>
        <begin position="18"/>
        <end position="106"/>
    </location>
</feature>
<keyword id="KW-1015">Disulfide bond</keyword>
<keyword id="KW-0964">Secreted</keyword>
<keyword id="KW-0732">Signal</keyword>
<evidence type="ECO:0000255" key="1"/>
<evidence type="ECO:0000269" key="2">
    <source>
    </source>
</evidence>
<evidence type="ECO:0000303" key="3">
    <source>
    </source>
</evidence>
<evidence type="ECO:0000305" key="4"/>
<reference key="1">
    <citation type="journal article" date="2019" name="Toxins">
        <title>Missiles of mass disruption: composition and glandular origin of venom used as a projectile defensive weapon by the assassin bug Platymeris rhadamanthus.</title>
        <authorList>
            <person name="Walker A.A."/>
            <person name="Robinson S.D."/>
            <person name="Undheim E.A.B."/>
            <person name="Jin J."/>
            <person name="Han X."/>
            <person name="Fry B.G."/>
            <person name="Vetter I."/>
            <person name="King G.F."/>
        </authorList>
    </citation>
    <scope>NUCLEOTIDE SEQUENCE [MRNA]</scope>
    <scope>IDENTIFICATION BY MASS SPECTROMETRY</scope>
    <scope>SUBCELLULAR LOCATION</scope>
    <scope>TISSUE SPECIFICITY</scope>
    <source>
        <tissue>Venom</tissue>
        <tissue>Venom gland</tissue>
    </source>
</reference>
<organism>
    <name type="scientific">Platymeris rhadamanthus</name>
    <name type="common">Red spot assassin bug</name>
    <dbReference type="NCBI Taxonomy" id="1134088"/>
    <lineage>
        <taxon>Eukaryota</taxon>
        <taxon>Metazoa</taxon>
        <taxon>Ecdysozoa</taxon>
        <taxon>Arthropoda</taxon>
        <taxon>Hexapoda</taxon>
        <taxon>Insecta</taxon>
        <taxon>Pterygota</taxon>
        <taxon>Neoptera</taxon>
        <taxon>Paraneoptera</taxon>
        <taxon>Hemiptera</taxon>
        <taxon>Heteroptera</taxon>
        <taxon>Panheteroptera</taxon>
        <taxon>Cimicomorpha</taxon>
        <taxon>Reduviidae</taxon>
        <taxon>Platymeris</taxon>
    </lineage>
</organism>
<dbReference type="EMBL" id="MN208278">
    <property type="protein sequence ID" value="QHB21467.1"/>
    <property type="molecule type" value="mRNA"/>
</dbReference>
<dbReference type="GO" id="GO:0005576">
    <property type="term" value="C:extracellular region"/>
    <property type="evidence" value="ECO:0007669"/>
    <property type="project" value="UniProtKB-SubCell"/>
</dbReference>
<accession>A0A6B9L1A2</accession>
<protein>
    <recommendedName>
        <fullName evidence="3">Venom family 8-like peptide Pr8a</fullName>
    </recommendedName>
</protein>